<keyword id="KW-0067">ATP-binding</keyword>
<keyword id="KW-0903">Direct protein sequencing</keyword>
<keyword id="KW-1038">Host endoplasmic reticulum</keyword>
<keyword id="KW-0418">Kinase</keyword>
<keyword id="KW-0426">Late protein</keyword>
<keyword id="KW-0547">Nucleotide-binding</keyword>
<keyword id="KW-0597">Phosphoprotein</keyword>
<keyword id="KW-1185">Reference proteome</keyword>
<keyword id="KW-0723">Serine/threonine-protein kinase</keyword>
<keyword id="KW-0808">Transferase</keyword>
<reference key="1">
    <citation type="journal article" date="1995" name="J. Virol.">
        <title>Vaccinia virus morphogenesis is blocked by temperature-sensitive mutations in the F10 gene, which encodes protein kinase 2.</title>
        <authorList>
            <person name="Wang S."/>
            <person name="Shuman S."/>
        </authorList>
    </citation>
    <scope>NUCLEOTIDE SEQUENCE [GENOMIC DNA]</scope>
</reference>
<reference key="2">
    <citation type="submission" date="2003-02" db="EMBL/GenBank/DDBJ databases">
        <title>Sequencing of the coding region of Vaccinia-WR to an average 9-fold redundancy and an error rate of 0.16/10kb.</title>
        <authorList>
            <person name="Esposito J.J."/>
            <person name="Frace A.M."/>
            <person name="Sammons S.A."/>
            <person name="Olsen-Rasmussen M."/>
            <person name="Osborne J."/>
            <person name="Wohlhueter R."/>
        </authorList>
    </citation>
    <scope>NUCLEOTIDE SEQUENCE [LARGE SCALE GENOMIC DNA]</scope>
</reference>
<reference key="3">
    <citation type="journal article" date="1994" name="Proc. Natl. Acad. Sci. U.S.A.">
        <title>Vaccinia protein kinase 2: a second essential serine/threonine protein kinase encoded by vaccinia virus.</title>
        <authorList>
            <person name="Lin S."/>
            <person name="Broyles S.S."/>
        </authorList>
    </citation>
    <scope>PARTIAL PROTEIN SEQUENCE</scope>
    <scope>FUNCTION</scope>
</reference>
<reference key="4">
    <citation type="journal article" date="2005" name="J. Virol.">
        <title>Cell biological and functional characterization of the vaccinia virus F10 kinase: implications for the mechanism of virion morphogenesis.</title>
        <authorList>
            <person name="Punjabi A."/>
            <person name="Traktman P."/>
        </authorList>
    </citation>
    <scope>FUNCTION</scope>
    <scope>SUBCELLULAR LOCATION</scope>
    <scope>INDUCTION</scope>
    <scope>PHOSPHORYLATION</scope>
</reference>
<reference key="5">
    <citation type="journal article" date="2015" name="J. Virol.">
        <title>Deciphering poxvirus gene expression by RNA sequencing and ribosome profiling.</title>
        <authorList>
            <person name="Yang Z."/>
            <person name="Cao S."/>
            <person name="Martens C.A."/>
            <person name="Porcella S.F."/>
            <person name="Xie Z."/>
            <person name="Ma M."/>
            <person name="Shen B."/>
            <person name="Moss B."/>
        </authorList>
    </citation>
    <scope>INDUCTION</scope>
</reference>
<organismHost>
    <name type="scientific">Bos taurus</name>
    <name type="common">Bovine</name>
    <dbReference type="NCBI Taxonomy" id="9913"/>
</organismHost>
<gene>
    <name type="primary">OPG054</name>
    <name type="ordered locus">VACWR049</name>
    <name type="ORF">F10L</name>
    <name type="ORF">VPK2</name>
</gene>
<accession>Q89121</accession>
<sequence>MGVANDSSPEYQWMSPHRLSDTVILGDCLYFNNIMSQLDLHQNWAPSVRLLNYFKNFNKETLLKIEENDYINSSFFQQKDKRFYPINDDFYHISTGGYGIVFKIDNYVVKFVFEATKLYSPMETTAEFTVPKFLYNNLKGDEKKLIVCAWAMGLNYKLTFLHTLYKRVLHMLLLLIQTMDGQELSLRYSSKVFLKAFNERKDSIKFVKLLSHFYPAVINSNINVINYFNRMFHFFEHEKRTNYEYERGNIIIFPLALYSADKVDTELAIKLGFKSLVQYIKFIFLQMALLYIKIYELPCCDNFLHADLKPDNILLFDSNEPIIIHLKDKKFVFNERIKSALNDFDFSQVAGIINKKIKNNFKVEHNWYYDFHFFVHTLLKTYPEIEKDIEFSTALEEFIMCTKTDCDKYRLKVSILHPISFLEKFIMRDIFSDWINGGN</sequence>
<organism>
    <name type="scientific">Vaccinia virus (strain Western Reserve)</name>
    <name type="common">VACV</name>
    <name type="synonym">Vaccinia virus (strain WR)</name>
    <dbReference type="NCBI Taxonomy" id="10254"/>
    <lineage>
        <taxon>Viruses</taxon>
        <taxon>Varidnaviria</taxon>
        <taxon>Bamfordvirae</taxon>
        <taxon>Nucleocytoviricota</taxon>
        <taxon>Pokkesviricetes</taxon>
        <taxon>Chitovirales</taxon>
        <taxon>Poxviridae</taxon>
        <taxon>Chordopoxvirinae</taxon>
        <taxon>Orthopoxvirus</taxon>
        <taxon>Vaccinia virus</taxon>
    </lineage>
</organism>
<proteinExistence type="evidence at protein level"/>
<protein>
    <recommendedName>
        <fullName>Serine/threonine-protein kinase 2</fullName>
        <ecNumber>2.7.11.1</ecNumber>
    </recommendedName>
    <alternativeName>
        <fullName>Vaccinia protein kinase 2</fullName>
    </alternativeName>
</protein>
<name>VPK2_VACCW</name>
<evidence type="ECO:0000255" key="1">
    <source>
        <dbReference type="PROSITE-ProRule" id="PRU00159"/>
    </source>
</evidence>
<evidence type="ECO:0000255" key="2">
    <source>
        <dbReference type="PROSITE-ProRule" id="PRU10027"/>
    </source>
</evidence>
<evidence type="ECO:0000269" key="3">
    <source>
    </source>
</evidence>
<evidence type="ECO:0000269" key="4">
    <source>
    </source>
</evidence>
<evidence type="ECO:0000269" key="5">
    <source>
    </source>
</evidence>
<dbReference type="EC" id="2.7.11.1"/>
<dbReference type="EMBL" id="U32589">
    <property type="protein sequence ID" value="AAA83263.1"/>
    <property type="molecule type" value="Genomic_DNA"/>
</dbReference>
<dbReference type="EMBL" id="AY243312">
    <property type="protein sequence ID" value="AAO89328.1"/>
    <property type="molecule type" value="Genomic_DNA"/>
</dbReference>
<dbReference type="RefSeq" id="YP_232931.1">
    <property type="nucleotide sequence ID" value="NC_006998.1"/>
</dbReference>
<dbReference type="DNASU" id="3707506"/>
<dbReference type="GeneID" id="3707506"/>
<dbReference type="KEGG" id="vg:3707506"/>
<dbReference type="Proteomes" id="UP000000344">
    <property type="component" value="Genome"/>
</dbReference>
<dbReference type="GO" id="GO:0044165">
    <property type="term" value="C:host cell endoplasmic reticulum"/>
    <property type="evidence" value="ECO:0007669"/>
    <property type="project" value="UniProtKB-SubCell"/>
</dbReference>
<dbReference type="GO" id="GO:0044172">
    <property type="term" value="C:host cell endoplasmic reticulum-Golgi intermediate compartment"/>
    <property type="evidence" value="ECO:0007669"/>
    <property type="project" value="UniProtKB-SubCell"/>
</dbReference>
<dbReference type="GO" id="GO:0005524">
    <property type="term" value="F:ATP binding"/>
    <property type="evidence" value="ECO:0007669"/>
    <property type="project" value="UniProtKB-KW"/>
</dbReference>
<dbReference type="GO" id="GO:0106310">
    <property type="term" value="F:protein serine kinase activity"/>
    <property type="evidence" value="ECO:0007669"/>
    <property type="project" value="RHEA"/>
</dbReference>
<dbReference type="GO" id="GO:0004674">
    <property type="term" value="F:protein serine/threonine kinase activity"/>
    <property type="evidence" value="ECO:0007669"/>
    <property type="project" value="UniProtKB-KW"/>
</dbReference>
<dbReference type="InterPro" id="IPR008790">
    <property type="entry name" value="Poxvirus_ser/thr_kinase"/>
</dbReference>
<dbReference type="InterPro" id="IPR000719">
    <property type="entry name" value="Prot_kinase_dom"/>
</dbReference>
<dbReference type="InterPro" id="IPR008271">
    <property type="entry name" value="Ser/Thr_kinase_AS"/>
</dbReference>
<dbReference type="Pfam" id="PF05445">
    <property type="entry name" value="Pox_ser-thr_kin"/>
    <property type="match status" value="1"/>
</dbReference>
<dbReference type="PIRSF" id="PIRSF015695">
    <property type="entry name" value="STPK_F10L"/>
    <property type="match status" value="1"/>
</dbReference>
<dbReference type="PROSITE" id="PS50011">
    <property type="entry name" value="PROTEIN_KINASE_DOM"/>
    <property type="match status" value="1"/>
</dbReference>
<dbReference type="PROSITE" id="PS00108">
    <property type="entry name" value="PROTEIN_KINASE_ST"/>
    <property type="match status" value="1"/>
</dbReference>
<feature type="chain" id="PRO_0000086799" description="Serine/threonine-protein kinase 2">
    <location>
        <begin position="1"/>
        <end position="439"/>
    </location>
</feature>
<feature type="domain" description="Protein kinase" evidence="1">
    <location>
        <begin position="87"/>
        <end position="439"/>
    </location>
</feature>
<feature type="active site" description="Proton acceptor" evidence="1 2">
    <location>
        <position position="307"/>
    </location>
</feature>
<feature type="binding site" evidence="1">
    <location>
        <begin position="93"/>
        <end position="101"/>
    </location>
    <ligand>
        <name>ATP</name>
        <dbReference type="ChEBI" id="CHEBI:30616"/>
    </ligand>
</feature>
<feature type="binding site" evidence="1">
    <location>
        <position position="117"/>
    </location>
    <ligand>
        <name>ATP</name>
        <dbReference type="ChEBI" id="CHEBI:30616"/>
    </ligand>
</feature>
<comment type="function">
    <text evidence="3 5">Essential serine-protein kinase involved in the early stage of virion morphogenesis.</text>
</comment>
<comment type="catalytic activity">
    <reaction>
        <text>L-seryl-[protein] + ATP = O-phospho-L-seryl-[protein] + ADP + H(+)</text>
        <dbReference type="Rhea" id="RHEA:17989"/>
        <dbReference type="Rhea" id="RHEA-COMP:9863"/>
        <dbReference type="Rhea" id="RHEA-COMP:11604"/>
        <dbReference type="ChEBI" id="CHEBI:15378"/>
        <dbReference type="ChEBI" id="CHEBI:29999"/>
        <dbReference type="ChEBI" id="CHEBI:30616"/>
        <dbReference type="ChEBI" id="CHEBI:83421"/>
        <dbReference type="ChEBI" id="CHEBI:456216"/>
        <dbReference type="EC" id="2.7.11.1"/>
    </reaction>
</comment>
<comment type="catalytic activity">
    <reaction>
        <text>L-threonyl-[protein] + ATP = O-phospho-L-threonyl-[protein] + ADP + H(+)</text>
        <dbReference type="Rhea" id="RHEA:46608"/>
        <dbReference type="Rhea" id="RHEA-COMP:11060"/>
        <dbReference type="Rhea" id="RHEA-COMP:11605"/>
        <dbReference type="ChEBI" id="CHEBI:15378"/>
        <dbReference type="ChEBI" id="CHEBI:30013"/>
        <dbReference type="ChEBI" id="CHEBI:30616"/>
        <dbReference type="ChEBI" id="CHEBI:61977"/>
        <dbReference type="ChEBI" id="CHEBI:456216"/>
        <dbReference type="EC" id="2.7.11.1"/>
    </reaction>
</comment>
<comment type="subcellular location">
    <subcellularLocation>
        <location>Host endoplasmic reticulum</location>
    </subcellularLocation>
    <subcellularLocation>
        <location evidence="3">Host endoplasmic reticulum-Golgi intermediate compartment</location>
    </subcellularLocation>
</comment>
<comment type="induction">
    <text evidence="3 4">Expressed in the late phase of the viral replicative cycle.</text>
</comment>
<comment type="PTM">
    <text evidence="3">Phosphorylated in vivo. Autophosphorylated in vitro.</text>
</comment>
<comment type="similarity">
    <text evidence="1">Belongs to the protein kinase superfamily. Ser/Thr protein kinase family.</text>
</comment>